<name>BGAT_MOUSE</name>
<feature type="chain" id="PRO_0000157293" description="Histo-blood group ABO system transferase">
    <location>
        <begin position="1"/>
        <end position="332"/>
    </location>
</feature>
<feature type="topological domain" description="Cytoplasmic" evidence="4">
    <location>
        <begin position="1"/>
        <end position="13"/>
    </location>
</feature>
<feature type="transmembrane region" description="Helical; Signal-anchor for type II membrane protein" evidence="4">
    <location>
        <begin position="14"/>
        <end position="34"/>
    </location>
</feature>
<feature type="topological domain" description="Lumenal" evidence="4">
    <location>
        <begin position="35"/>
        <end position="332"/>
    </location>
</feature>
<feature type="active site" description="Nucleophile" evidence="2">
    <location>
        <position position="282"/>
    </location>
</feature>
<feature type="binding site" evidence="3">
    <location>
        <begin position="100"/>
        <end position="102"/>
    </location>
    <ligand>
        <name>UDP-N-acetyl-alpha-D-galactosamine</name>
        <dbReference type="ChEBI" id="CHEBI:67138"/>
    </ligand>
</feature>
<feature type="binding site" evidence="3">
    <location>
        <position position="105"/>
    </location>
    <ligand>
        <name>UDP-N-acetyl-alpha-D-galactosamine</name>
        <dbReference type="ChEBI" id="CHEBI:67138"/>
    </ligand>
</feature>
<feature type="binding site" evidence="3">
    <location>
        <begin position="190"/>
        <end position="192"/>
    </location>
    <ligand>
        <name>UDP-N-acetyl-alpha-D-galactosamine</name>
        <dbReference type="ChEBI" id="CHEBI:67138"/>
    </ligand>
</feature>
<feature type="binding site" evidence="2">
    <location>
        <position position="190"/>
    </location>
    <ligand>
        <name>Mn(2+)</name>
        <dbReference type="ChEBI" id="CHEBI:29035"/>
    </ligand>
</feature>
<feature type="binding site" evidence="2">
    <location>
        <position position="192"/>
    </location>
    <ligand>
        <name>Mn(2+)</name>
        <dbReference type="ChEBI" id="CHEBI:29035"/>
    </ligand>
</feature>
<feature type="binding site" evidence="3">
    <location>
        <position position="212"/>
    </location>
    <ligand>
        <name>an alpha-L-fucosyl-(1-&gt;2)-beta-D-galactosyl derivative</name>
        <dbReference type="ChEBI" id="CHEBI:140327"/>
    </ligand>
</feature>
<feature type="binding site" evidence="3">
    <location>
        <position position="224"/>
    </location>
    <ligand>
        <name>an alpha-L-fucosyl-(1-&gt;2)-beta-D-galactosyl derivative</name>
        <dbReference type="ChEBI" id="CHEBI:140327"/>
    </ligand>
</feature>
<feature type="binding site" evidence="3">
    <location>
        <position position="282"/>
    </location>
    <ligand>
        <name>an alpha-L-fucosyl-(1-&gt;2)-beta-D-galactosyl derivative</name>
        <dbReference type="ChEBI" id="CHEBI:140327"/>
    </ligand>
</feature>
<feature type="binding site" evidence="3">
    <location>
        <position position="305"/>
    </location>
    <ligand>
        <name>an alpha-L-fucosyl-(1-&gt;2)-beta-D-galactosyl derivative</name>
        <dbReference type="ChEBI" id="CHEBI:140327"/>
    </ligand>
</feature>
<feature type="glycosylation site" description="N-linked (GlcNAc...) asparagine" evidence="4">
    <location>
        <position position="92"/>
    </location>
</feature>
<feature type="sequence conflict" description="In Ref. 2; BAC29005." evidence="6" ref="2">
    <original>G</original>
    <variation>R</variation>
    <location>
        <position position="77"/>
    </location>
</feature>
<feature type="sequence conflict" description="In Ref. 2; BAC29005." evidence="6" ref="2">
    <original>L</original>
    <variation>I</variation>
    <location>
        <position position="109"/>
    </location>
</feature>
<feature type="sequence conflict" description="In Ref. 2; BAC28473." evidence="6" ref="2">
    <original>W</original>
    <variation>C</variation>
    <location>
        <position position="160"/>
    </location>
</feature>
<dbReference type="EC" id="2.4.1.40" evidence="3"/>
<dbReference type="EC" id="2.4.1.37" evidence="3"/>
<dbReference type="EMBL" id="AB041038">
    <property type="protein sequence ID" value="BAB20559.1"/>
    <property type="molecule type" value="Genomic_DNA"/>
</dbReference>
<dbReference type="EMBL" id="AB041039">
    <property type="protein sequence ID" value="BAB20560.1"/>
    <property type="molecule type" value="mRNA"/>
</dbReference>
<dbReference type="EMBL" id="AK033786">
    <property type="protein sequence ID" value="BAC28473.1"/>
    <property type="molecule type" value="mRNA"/>
</dbReference>
<dbReference type="EMBL" id="AK035261">
    <property type="protein sequence ID" value="BAC29005.1"/>
    <property type="molecule type" value="mRNA"/>
</dbReference>
<dbReference type="EMBL" id="AL773563">
    <property type="protein sequence ID" value="CAM23695.1"/>
    <property type="status" value="ALT_SEQ"/>
    <property type="molecule type" value="Genomic_DNA"/>
</dbReference>
<dbReference type="EMBL" id="AL773563">
    <property type="protein sequence ID" value="CAM23696.1"/>
    <property type="molecule type" value="Genomic_DNA"/>
</dbReference>
<dbReference type="EMBL" id="CH466542">
    <property type="protein sequence ID" value="EDL08332.1"/>
    <property type="molecule type" value="Genomic_DNA"/>
</dbReference>
<dbReference type="EMBL" id="BC116759">
    <property type="protein sequence ID" value="AAI16760.1"/>
    <property type="molecule type" value="mRNA"/>
</dbReference>
<dbReference type="EMBL" id="BC116761">
    <property type="protein sequence ID" value="AAI16762.1"/>
    <property type="molecule type" value="mRNA"/>
</dbReference>
<dbReference type="CCDS" id="CCDS15811.1"/>
<dbReference type="RefSeq" id="NP_001277373.1">
    <property type="nucleotide sequence ID" value="NM_001290444.1"/>
</dbReference>
<dbReference type="RefSeq" id="NP_109643.3">
    <property type="nucleotide sequence ID" value="NM_030718.5"/>
</dbReference>
<dbReference type="SMR" id="P38649"/>
<dbReference type="FunCoup" id="P38649">
    <property type="interactions" value="41"/>
</dbReference>
<dbReference type="STRING" id="10090.ENSMUSP00000099964"/>
<dbReference type="CAZy" id="GT6">
    <property type="family name" value="Glycosyltransferase Family 6"/>
</dbReference>
<dbReference type="GlyCosmos" id="P38649">
    <property type="glycosylation" value="1 site, No reported glycans"/>
</dbReference>
<dbReference type="GlyGen" id="P38649">
    <property type="glycosylation" value="1 site"/>
</dbReference>
<dbReference type="iPTMnet" id="P38649"/>
<dbReference type="PhosphoSitePlus" id="P38649"/>
<dbReference type="PaxDb" id="10090-ENSMUSP00000099964"/>
<dbReference type="ProteomicsDB" id="273673"/>
<dbReference type="Antibodypedia" id="80247">
    <property type="antibodies" value="842 antibodies from 23 providers"/>
</dbReference>
<dbReference type="DNASU" id="80908"/>
<dbReference type="Ensembl" id="ENSMUST00000102900.2">
    <property type="protein sequence ID" value="ENSMUSP00000099964.2"/>
    <property type="gene ID" value="ENSMUSG00000015787.16"/>
</dbReference>
<dbReference type="GeneID" id="80908"/>
<dbReference type="KEGG" id="mmu:80908"/>
<dbReference type="UCSC" id="uc008iwb.2">
    <property type="organism name" value="mouse"/>
</dbReference>
<dbReference type="AGR" id="MGI:2135738"/>
<dbReference type="CTD" id="28"/>
<dbReference type="MGI" id="MGI:2135738">
    <property type="gene designation" value="Abo"/>
</dbReference>
<dbReference type="VEuPathDB" id="HostDB:ENSMUSG00000015787"/>
<dbReference type="eggNOG" id="ENOG502QQAJ">
    <property type="taxonomic scope" value="Eukaryota"/>
</dbReference>
<dbReference type="GeneTree" id="ENSGT00950000182858"/>
<dbReference type="HOGENOM" id="CLU_062445_0_1_1"/>
<dbReference type="InParanoid" id="P38649"/>
<dbReference type="OMA" id="TGKPKCY"/>
<dbReference type="PhylomeDB" id="P38649"/>
<dbReference type="TreeFam" id="TF330991"/>
<dbReference type="BRENDA" id="2.4.1.37">
    <property type="organism ID" value="3474"/>
</dbReference>
<dbReference type="BRENDA" id="2.4.1.40">
    <property type="organism ID" value="3474"/>
</dbReference>
<dbReference type="BRENDA" id="2.4.1.88">
    <property type="organism ID" value="3474"/>
</dbReference>
<dbReference type="Reactome" id="R-MMU-9033807">
    <property type="pathway name" value="ABO blood group biosynthesis"/>
</dbReference>
<dbReference type="UniPathway" id="UPA00378"/>
<dbReference type="BioGRID-ORCS" id="80908">
    <property type="hits" value="1 hit in 78 CRISPR screens"/>
</dbReference>
<dbReference type="ChiTaRS" id="Abo">
    <property type="organism name" value="mouse"/>
</dbReference>
<dbReference type="PRO" id="PR:P38649"/>
<dbReference type="Proteomes" id="UP000000589">
    <property type="component" value="Chromosome 2"/>
</dbReference>
<dbReference type="RNAct" id="P38649">
    <property type="molecule type" value="protein"/>
</dbReference>
<dbReference type="Bgee" id="ENSMUSG00000015787">
    <property type="expression patterns" value="Expressed in prostate gland ventral lobe and 23 other cell types or tissues"/>
</dbReference>
<dbReference type="ExpressionAtlas" id="P38649">
    <property type="expression patterns" value="baseline and differential"/>
</dbReference>
<dbReference type="GO" id="GO:0005576">
    <property type="term" value="C:extracellular region"/>
    <property type="evidence" value="ECO:0000266"/>
    <property type="project" value="MGI"/>
</dbReference>
<dbReference type="GO" id="GO:0005794">
    <property type="term" value="C:Golgi apparatus"/>
    <property type="evidence" value="ECO:0000266"/>
    <property type="project" value="MGI"/>
</dbReference>
<dbReference type="GO" id="GO:0032580">
    <property type="term" value="C:Golgi cisterna membrane"/>
    <property type="evidence" value="ECO:0007669"/>
    <property type="project" value="UniProtKB-SubCell"/>
</dbReference>
<dbReference type="GO" id="GO:0004381">
    <property type="term" value="F:fucosylgalactoside 3-alpha-galactosyltransferase activity"/>
    <property type="evidence" value="ECO:0000314"/>
    <property type="project" value="MGI"/>
</dbReference>
<dbReference type="GO" id="GO:0004380">
    <property type="term" value="F:glycoprotein-fucosylgalactoside alpha-N-acetylgalactosaminyltransferase activity"/>
    <property type="evidence" value="ECO:0000314"/>
    <property type="project" value="MGI"/>
</dbReference>
<dbReference type="GO" id="GO:0046872">
    <property type="term" value="F:metal ion binding"/>
    <property type="evidence" value="ECO:0007669"/>
    <property type="project" value="UniProtKB-KW"/>
</dbReference>
<dbReference type="GO" id="GO:0009312">
    <property type="term" value="P:oligosaccharide biosynthetic process"/>
    <property type="evidence" value="ECO:0000314"/>
    <property type="project" value="MGI"/>
</dbReference>
<dbReference type="GO" id="GO:0006486">
    <property type="term" value="P:protein glycosylation"/>
    <property type="evidence" value="ECO:0007669"/>
    <property type="project" value="UniProtKB-UniPathway"/>
</dbReference>
<dbReference type="CDD" id="cd02515">
    <property type="entry name" value="Glyco_transf_6"/>
    <property type="match status" value="1"/>
</dbReference>
<dbReference type="FunFam" id="3.90.550.10:FF:000022">
    <property type="entry name" value="Histo-blood group ABO system transferase"/>
    <property type="match status" value="1"/>
</dbReference>
<dbReference type="Gene3D" id="3.90.550.10">
    <property type="entry name" value="Spore Coat Polysaccharide Biosynthesis Protein SpsA, Chain A"/>
    <property type="match status" value="1"/>
</dbReference>
<dbReference type="InterPro" id="IPR005076">
    <property type="entry name" value="Glyco_trans_6"/>
</dbReference>
<dbReference type="InterPro" id="IPR029044">
    <property type="entry name" value="Nucleotide-diphossugar_trans"/>
</dbReference>
<dbReference type="PANTHER" id="PTHR10462">
    <property type="entry name" value="GLYCOSYLTRANSFERASE-RELATED"/>
    <property type="match status" value="1"/>
</dbReference>
<dbReference type="PANTHER" id="PTHR10462:SF29">
    <property type="entry name" value="HISTO-BLOOD GROUP ABO SYSTEM TRANSFERASE"/>
    <property type="match status" value="1"/>
</dbReference>
<dbReference type="Pfam" id="PF03414">
    <property type="entry name" value="Glyco_transf_6"/>
    <property type="match status" value="1"/>
</dbReference>
<dbReference type="SUPFAM" id="SSF53448">
    <property type="entry name" value="Nucleotide-diphospho-sugar transferases"/>
    <property type="match status" value="1"/>
</dbReference>
<reference key="1">
    <citation type="journal article" date="2001" name="J. Biol. Chem.">
        <title>Murine equivalent of the human histo-blood group ABO gene is a cis-AB gene and encodes a glycosyltransferase with both A and B transferase activity.</title>
        <authorList>
            <person name="Yamamoto M."/>
            <person name="Lin X.-H."/>
            <person name="Kominato Y."/>
            <person name="Hata Y."/>
            <person name="Noda R."/>
            <person name="Saitou N."/>
            <person name="Yamamoto F."/>
        </authorList>
    </citation>
    <scope>NUCLEOTIDE SEQUENCE [GENOMIC DNA / MRNA]</scope>
    <scope>TISSUE SPECIFICITY</scope>
</reference>
<reference key="2">
    <citation type="journal article" date="2005" name="Science">
        <title>The transcriptional landscape of the mammalian genome.</title>
        <authorList>
            <person name="Carninci P."/>
            <person name="Kasukawa T."/>
            <person name="Katayama S."/>
            <person name="Gough J."/>
            <person name="Frith M.C."/>
            <person name="Maeda N."/>
            <person name="Oyama R."/>
            <person name="Ravasi T."/>
            <person name="Lenhard B."/>
            <person name="Wells C."/>
            <person name="Kodzius R."/>
            <person name="Shimokawa K."/>
            <person name="Bajic V.B."/>
            <person name="Brenner S.E."/>
            <person name="Batalov S."/>
            <person name="Forrest A.R."/>
            <person name="Zavolan M."/>
            <person name="Davis M.J."/>
            <person name="Wilming L.G."/>
            <person name="Aidinis V."/>
            <person name="Allen J.E."/>
            <person name="Ambesi-Impiombato A."/>
            <person name="Apweiler R."/>
            <person name="Aturaliya R.N."/>
            <person name="Bailey T.L."/>
            <person name="Bansal M."/>
            <person name="Baxter L."/>
            <person name="Beisel K.W."/>
            <person name="Bersano T."/>
            <person name="Bono H."/>
            <person name="Chalk A.M."/>
            <person name="Chiu K.P."/>
            <person name="Choudhary V."/>
            <person name="Christoffels A."/>
            <person name="Clutterbuck D.R."/>
            <person name="Crowe M.L."/>
            <person name="Dalla E."/>
            <person name="Dalrymple B.P."/>
            <person name="de Bono B."/>
            <person name="Della Gatta G."/>
            <person name="di Bernardo D."/>
            <person name="Down T."/>
            <person name="Engstrom P."/>
            <person name="Fagiolini M."/>
            <person name="Faulkner G."/>
            <person name="Fletcher C.F."/>
            <person name="Fukushima T."/>
            <person name="Furuno M."/>
            <person name="Futaki S."/>
            <person name="Gariboldi M."/>
            <person name="Georgii-Hemming P."/>
            <person name="Gingeras T.R."/>
            <person name="Gojobori T."/>
            <person name="Green R.E."/>
            <person name="Gustincich S."/>
            <person name="Harbers M."/>
            <person name="Hayashi Y."/>
            <person name="Hensch T.K."/>
            <person name="Hirokawa N."/>
            <person name="Hill D."/>
            <person name="Huminiecki L."/>
            <person name="Iacono M."/>
            <person name="Ikeo K."/>
            <person name="Iwama A."/>
            <person name="Ishikawa T."/>
            <person name="Jakt M."/>
            <person name="Kanapin A."/>
            <person name="Katoh M."/>
            <person name="Kawasawa Y."/>
            <person name="Kelso J."/>
            <person name="Kitamura H."/>
            <person name="Kitano H."/>
            <person name="Kollias G."/>
            <person name="Krishnan S.P."/>
            <person name="Kruger A."/>
            <person name="Kummerfeld S.K."/>
            <person name="Kurochkin I.V."/>
            <person name="Lareau L.F."/>
            <person name="Lazarevic D."/>
            <person name="Lipovich L."/>
            <person name="Liu J."/>
            <person name="Liuni S."/>
            <person name="McWilliam S."/>
            <person name="Madan Babu M."/>
            <person name="Madera M."/>
            <person name="Marchionni L."/>
            <person name="Matsuda H."/>
            <person name="Matsuzawa S."/>
            <person name="Miki H."/>
            <person name="Mignone F."/>
            <person name="Miyake S."/>
            <person name="Morris K."/>
            <person name="Mottagui-Tabar S."/>
            <person name="Mulder N."/>
            <person name="Nakano N."/>
            <person name="Nakauchi H."/>
            <person name="Ng P."/>
            <person name="Nilsson R."/>
            <person name="Nishiguchi S."/>
            <person name="Nishikawa S."/>
            <person name="Nori F."/>
            <person name="Ohara O."/>
            <person name="Okazaki Y."/>
            <person name="Orlando V."/>
            <person name="Pang K.C."/>
            <person name="Pavan W.J."/>
            <person name="Pavesi G."/>
            <person name="Pesole G."/>
            <person name="Petrovsky N."/>
            <person name="Piazza S."/>
            <person name="Reed J."/>
            <person name="Reid J.F."/>
            <person name="Ring B.Z."/>
            <person name="Ringwald M."/>
            <person name="Rost B."/>
            <person name="Ruan Y."/>
            <person name="Salzberg S.L."/>
            <person name="Sandelin A."/>
            <person name="Schneider C."/>
            <person name="Schoenbach C."/>
            <person name="Sekiguchi K."/>
            <person name="Semple C.A."/>
            <person name="Seno S."/>
            <person name="Sessa L."/>
            <person name="Sheng Y."/>
            <person name="Shibata Y."/>
            <person name="Shimada H."/>
            <person name="Shimada K."/>
            <person name="Silva D."/>
            <person name="Sinclair B."/>
            <person name="Sperling S."/>
            <person name="Stupka E."/>
            <person name="Sugiura K."/>
            <person name="Sultana R."/>
            <person name="Takenaka Y."/>
            <person name="Taki K."/>
            <person name="Tammoja K."/>
            <person name="Tan S.L."/>
            <person name="Tang S."/>
            <person name="Taylor M.S."/>
            <person name="Tegner J."/>
            <person name="Teichmann S.A."/>
            <person name="Ueda H.R."/>
            <person name="van Nimwegen E."/>
            <person name="Verardo R."/>
            <person name="Wei C.L."/>
            <person name="Yagi K."/>
            <person name="Yamanishi H."/>
            <person name="Zabarovsky E."/>
            <person name="Zhu S."/>
            <person name="Zimmer A."/>
            <person name="Hide W."/>
            <person name="Bult C."/>
            <person name="Grimmond S.M."/>
            <person name="Teasdale R.D."/>
            <person name="Liu E.T."/>
            <person name="Brusic V."/>
            <person name="Quackenbush J."/>
            <person name="Wahlestedt C."/>
            <person name="Mattick J.S."/>
            <person name="Hume D.A."/>
            <person name="Kai C."/>
            <person name="Sasaki D."/>
            <person name="Tomaru Y."/>
            <person name="Fukuda S."/>
            <person name="Kanamori-Katayama M."/>
            <person name="Suzuki M."/>
            <person name="Aoki J."/>
            <person name="Arakawa T."/>
            <person name="Iida J."/>
            <person name="Imamura K."/>
            <person name="Itoh M."/>
            <person name="Kato T."/>
            <person name="Kawaji H."/>
            <person name="Kawagashira N."/>
            <person name="Kawashima T."/>
            <person name="Kojima M."/>
            <person name="Kondo S."/>
            <person name="Konno H."/>
            <person name="Nakano K."/>
            <person name="Ninomiya N."/>
            <person name="Nishio T."/>
            <person name="Okada M."/>
            <person name="Plessy C."/>
            <person name="Shibata K."/>
            <person name="Shiraki T."/>
            <person name="Suzuki S."/>
            <person name="Tagami M."/>
            <person name="Waki K."/>
            <person name="Watahiki A."/>
            <person name="Okamura-Oho Y."/>
            <person name="Suzuki H."/>
            <person name="Kawai J."/>
            <person name="Hayashizaki Y."/>
        </authorList>
    </citation>
    <scope>NUCLEOTIDE SEQUENCE [LARGE SCALE MRNA]</scope>
    <source>
        <strain>C57BL/6J</strain>
        <tissue>Epididymis</tissue>
        <tissue>Urinary bladder</tissue>
    </source>
</reference>
<reference key="3">
    <citation type="journal article" date="2009" name="PLoS Biol.">
        <title>Lineage-specific biology revealed by a finished genome assembly of the mouse.</title>
        <authorList>
            <person name="Church D.M."/>
            <person name="Goodstadt L."/>
            <person name="Hillier L.W."/>
            <person name="Zody M.C."/>
            <person name="Goldstein S."/>
            <person name="She X."/>
            <person name="Bult C.J."/>
            <person name="Agarwala R."/>
            <person name="Cherry J.L."/>
            <person name="DiCuccio M."/>
            <person name="Hlavina W."/>
            <person name="Kapustin Y."/>
            <person name="Meric P."/>
            <person name="Maglott D."/>
            <person name="Birtle Z."/>
            <person name="Marques A.C."/>
            <person name="Graves T."/>
            <person name="Zhou S."/>
            <person name="Teague B."/>
            <person name="Potamousis K."/>
            <person name="Churas C."/>
            <person name="Place M."/>
            <person name="Herschleb J."/>
            <person name="Runnheim R."/>
            <person name="Forrest D."/>
            <person name="Amos-Landgraf J."/>
            <person name="Schwartz D.C."/>
            <person name="Cheng Z."/>
            <person name="Lindblad-Toh K."/>
            <person name="Eichler E.E."/>
            <person name="Ponting C.P."/>
        </authorList>
    </citation>
    <scope>NUCLEOTIDE SEQUENCE [LARGE SCALE GENOMIC DNA]</scope>
    <source>
        <strain>C57BL/6J</strain>
    </source>
</reference>
<reference key="4">
    <citation type="submission" date="2005-07" db="EMBL/GenBank/DDBJ databases">
        <authorList>
            <person name="Mural R.J."/>
            <person name="Adams M.D."/>
            <person name="Myers E.W."/>
            <person name="Smith H.O."/>
            <person name="Venter J.C."/>
        </authorList>
    </citation>
    <scope>NUCLEOTIDE SEQUENCE [LARGE SCALE GENOMIC DNA]</scope>
</reference>
<reference key="5">
    <citation type="journal article" date="2004" name="Genome Res.">
        <title>The status, quality, and expansion of the NIH full-length cDNA project: the Mammalian Gene Collection (MGC).</title>
        <authorList>
            <consortium name="The MGC Project Team"/>
        </authorList>
    </citation>
    <scope>NUCLEOTIDE SEQUENCE [LARGE SCALE MRNA]</scope>
    <source>
        <tissue>Testis</tissue>
    </source>
</reference>
<reference key="6">
    <citation type="journal article" date="1994" name="Electrophoresis">
        <title>Separation and sequencing of familiar and novel murine proteins using preparative two-dimensional gel electrophoresis.</title>
        <authorList>
            <person name="Merrick B.A."/>
            <person name="Patterson R.M."/>
            <person name="Wichter L.L."/>
            <person name="He C."/>
            <person name="Selkirk J.K."/>
        </authorList>
    </citation>
    <scope>PRELIMINARY PARTIAL PROTEIN SEQUENCE</scope>
    <source>
        <tissue>Fibroblast</tissue>
    </source>
</reference>
<proteinExistence type="evidence at protein level"/>
<protein>
    <recommendedName>
        <fullName>Histo-blood group ABO system transferase</fullName>
    </recommendedName>
    <alternativeName>
        <fullName>Cis-AB transferase</fullName>
    </alternativeName>
    <alternativeName>
        <fullName>Fucosylglycoprotein 3-alpha-galactosyltransferase</fullName>
    </alternativeName>
    <alternativeName>
        <fullName>Fucosylglycoprotein alpha-N-acetylgalactosaminyltransferase</fullName>
    </alternativeName>
    <alternativeName>
        <fullName>Glycoprotein-fucosylgalactoside alpha-N-acetylgalactosaminyltransferase</fullName>
        <ecNumber evidence="3">2.4.1.40</ecNumber>
    </alternativeName>
    <alternativeName>
        <fullName>Glycoprotein-fucosylgalactoside alpha-galactosyltransferase</fullName>
        <ecNumber evidence="3">2.4.1.37</ecNumber>
    </alternativeName>
    <alternativeName>
        <fullName>Histo-blood group A transferase</fullName>
        <shortName>A transferase</shortName>
    </alternativeName>
    <alternativeName>
        <fullName>Histo-blood group B transferase</fullName>
        <shortName>B transferase</shortName>
    </alternativeName>
    <alternativeName>
        <fullName>NAGAT</fullName>
    </alternativeName>
</protein>
<gene>
    <name type="primary">Abo</name>
</gene>
<organism>
    <name type="scientific">Mus musculus</name>
    <name type="common">Mouse</name>
    <dbReference type="NCBI Taxonomy" id="10090"/>
    <lineage>
        <taxon>Eukaryota</taxon>
        <taxon>Metazoa</taxon>
        <taxon>Chordata</taxon>
        <taxon>Craniata</taxon>
        <taxon>Vertebrata</taxon>
        <taxon>Euteleostomi</taxon>
        <taxon>Mammalia</taxon>
        <taxon>Eutheria</taxon>
        <taxon>Euarchontoglires</taxon>
        <taxon>Glires</taxon>
        <taxon>Rodentia</taxon>
        <taxon>Myomorpha</taxon>
        <taxon>Muroidea</taxon>
        <taxon>Muridae</taxon>
        <taxon>Murinae</taxon>
        <taxon>Mus</taxon>
        <taxon>Mus</taxon>
    </lineage>
</organism>
<keyword id="KW-0903">Direct protein sequencing</keyword>
<keyword id="KW-0325">Glycoprotein</keyword>
<keyword id="KW-0328">Glycosyltransferase</keyword>
<keyword id="KW-0333">Golgi apparatus</keyword>
<keyword id="KW-0464">Manganese</keyword>
<keyword id="KW-0472">Membrane</keyword>
<keyword id="KW-0479">Metal-binding</keyword>
<keyword id="KW-1185">Reference proteome</keyword>
<keyword id="KW-0964">Secreted</keyword>
<keyword id="KW-0735">Signal-anchor</keyword>
<keyword id="KW-0808">Transferase</keyword>
<keyword id="KW-0812">Transmembrane</keyword>
<keyword id="KW-1133">Transmembrane helix</keyword>
<accession>P38649</accession>
<accession>A2AL98</accession>
<accession>Q8BZH3</accession>
<accession>Q8BZQ6</accession>
<accession>Q9EQW2</accession>
<accession>Q9EQW3</accession>
<comment type="catalytic activity">
    <reaction evidence="3">
        <text>an alpha-L-fucosyl-(1-&gt;2)-beta-D-galactosyl derivative + UDP-N-acetyl-alpha-D-galactosamine = an N-acetyl-alpha-D-galactosaminyl-(1-&gt;3)-[alpha-L-fucosyl-(1-&gt;2)]-beta-D-galactosyl derivative + UDP + H(+)</text>
        <dbReference type="Rhea" id="RHEA:19021"/>
        <dbReference type="ChEBI" id="CHEBI:15378"/>
        <dbReference type="ChEBI" id="CHEBI:58223"/>
        <dbReference type="ChEBI" id="CHEBI:67138"/>
        <dbReference type="ChEBI" id="CHEBI:140327"/>
        <dbReference type="ChEBI" id="CHEBI:140559"/>
        <dbReference type="EC" id="2.4.1.40"/>
    </reaction>
</comment>
<comment type="catalytic activity">
    <reaction evidence="3">
        <text>an alpha-L-fucosyl-(1-&gt;2)-beta-D-galactosyl derivative + UDP-alpha-D-galactose = an alpha-D-galactosyl-(1-&gt;3)-[alpha-L-fucosyl-(1-&gt;2)]-beta-D-galactosyl derivative + UDP + H(+)</text>
        <dbReference type="Rhea" id="RHEA:14349"/>
        <dbReference type="ChEBI" id="CHEBI:15378"/>
        <dbReference type="ChEBI" id="CHEBI:58223"/>
        <dbReference type="ChEBI" id="CHEBI:66914"/>
        <dbReference type="ChEBI" id="CHEBI:140327"/>
        <dbReference type="ChEBI" id="CHEBI:140328"/>
        <dbReference type="EC" id="2.4.1.37"/>
    </reaction>
</comment>
<comment type="cofactor">
    <cofactor evidence="3">
        <name>Mn(2+)</name>
        <dbReference type="ChEBI" id="CHEBI:29035"/>
    </cofactor>
    <text evidence="3">Binds 1 Mn(2+) ion per subunit.</text>
</comment>
<comment type="pathway">
    <text evidence="3">Protein modification; protein glycosylation.</text>
</comment>
<comment type="subcellular location">
    <subcellularLocation>
        <location>Golgi apparatus</location>
        <location>Golgi stack membrane</location>
        <topology>Single-pass type II membrane protein</topology>
    </subcellularLocation>
    <subcellularLocation>
        <location>Secreted</location>
    </subcellularLocation>
    <text evidence="1">Membrane-bound form in trans cisternae of Golgi. Secreted into the body fluid (By similarity).</text>
</comment>
<comment type="tissue specificity">
    <text evidence="5">Submaxillary glands (at protein level).</text>
</comment>
<comment type="domain">
    <text>The conserved DXD motif is involved in cofactor binding. The manganese ion interacts with the beta-phosphate group of UDP and may also have a role in catalysis.</text>
</comment>
<comment type="similarity">
    <text evidence="6">Belongs to the glycosyltransferase 6 family.</text>
</comment>
<comment type="sequence caution" evidence="6">
    <conflict type="erroneous gene model prediction">
        <sequence resource="EMBL-CDS" id="CAM23695"/>
    </conflict>
</comment>
<evidence type="ECO:0000250" key="1"/>
<evidence type="ECO:0000250" key="2">
    <source>
        <dbReference type="UniProtKB" id="P14769"/>
    </source>
</evidence>
<evidence type="ECO:0000250" key="3">
    <source>
        <dbReference type="UniProtKB" id="P16442"/>
    </source>
</evidence>
<evidence type="ECO:0000255" key="4"/>
<evidence type="ECO:0000269" key="5">
    <source>
    </source>
</evidence>
<evidence type="ECO:0000305" key="6"/>
<sequence>MNLRGRPKCNFLHLGILPFAVFVLVFFGYLFLSFRSQNLGHPGAVTRNAYLQPRVLKPTRKDVLVLTPWLAPIIWEGTFNIDILNEQFRIRNTTIGLTVFAIKKYVVFLKLFLETAEQHFMVGHKVIYYVFTDRPADVPQVILGAGRQLVVLTVRNYTRWQDVSMHRMEMISHFSERRFLREVDYLVCADADMKFSDHVGVEILSTFFGTLHPGFYSSSREAFTYERRPQSQAYIPWDRGDFYYGGAFFGGSVLEVYHLTKACHEAMMEDKANGIEPVWHDESYLNKYLLYHKPTKVLSPEYLWDQQLLGWPSIMKKLRYVAVPKDHQAIRN</sequence>